<name>PTH_SPHAL</name>
<keyword id="KW-0963">Cytoplasm</keyword>
<keyword id="KW-0378">Hydrolase</keyword>
<keyword id="KW-1185">Reference proteome</keyword>
<keyword id="KW-0694">RNA-binding</keyword>
<keyword id="KW-0820">tRNA-binding</keyword>
<gene>
    <name evidence="1" type="primary">pth</name>
    <name type="ordered locus">Sala_1618</name>
</gene>
<accession>Q1GSP1</accession>
<proteinExistence type="inferred from homology"/>
<dbReference type="EC" id="3.1.1.29" evidence="1"/>
<dbReference type="EMBL" id="CP000356">
    <property type="protein sequence ID" value="ABF53331.1"/>
    <property type="molecule type" value="Genomic_DNA"/>
</dbReference>
<dbReference type="RefSeq" id="WP_011541911.1">
    <property type="nucleotide sequence ID" value="NC_008048.1"/>
</dbReference>
<dbReference type="SMR" id="Q1GSP1"/>
<dbReference type="STRING" id="317655.Sala_1618"/>
<dbReference type="KEGG" id="sal:Sala_1618"/>
<dbReference type="eggNOG" id="COG0193">
    <property type="taxonomic scope" value="Bacteria"/>
</dbReference>
<dbReference type="HOGENOM" id="CLU_062456_1_0_5"/>
<dbReference type="OrthoDB" id="9800507at2"/>
<dbReference type="Proteomes" id="UP000006578">
    <property type="component" value="Chromosome"/>
</dbReference>
<dbReference type="GO" id="GO:0005737">
    <property type="term" value="C:cytoplasm"/>
    <property type="evidence" value="ECO:0007669"/>
    <property type="project" value="UniProtKB-SubCell"/>
</dbReference>
<dbReference type="GO" id="GO:0004045">
    <property type="term" value="F:peptidyl-tRNA hydrolase activity"/>
    <property type="evidence" value="ECO:0007669"/>
    <property type="project" value="UniProtKB-UniRule"/>
</dbReference>
<dbReference type="GO" id="GO:0000049">
    <property type="term" value="F:tRNA binding"/>
    <property type="evidence" value="ECO:0007669"/>
    <property type="project" value="UniProtKB-UniRule"/>
</dbReference>
<dbReference type="GO" id="GO:0006515">
    <property type="term" value="P:protein quality control for misfolded or incompletely synthesized proteins"/>
    <property type="evidence" value="ECO:0007669"/>
    <property type="project" value="UniProtKB-UniRule"/>
</dbReference>
<dbReference type="GO" id="GO:0072344">
    <property type="term" value="P:rescue of stalled ribosome"/>
    <property type="evidence" value="ECO:0007669"/>
    <property type="project" value="UniProtKB-UniRule"/>
</dbReference>
<dbReference type="CDD" id="cd00462">
    <property type="entry name" value="PTH"/>
    <property type="match status" value="1"/>
</dbReference>
<dbReference type="FunFam" id="3.40.50.1470:FF:000001">
    <property type="entry name" value="Peptidyl-tRNA hydrolase"/>
    <property type="match status" value="1"/>
</dbReference>
<dbReference type="Gene3D" id="3.40.50.1470">
    <property type="entry name" value="Peptidyl-tRNA hydrolase"/>
    <property type="match status" value="1"/>
</dbReference>
<dbReference type="HAMAP" id="MF_00083">
    <property type="entry name" value="Pept_tRNA_hydro_bact"/>
    <property type="match status" value="1"/>
</dbReference>
<dbReference type="InterPro" id="IPR001328">
    <property type="entry name" value="Pept_tRNA_hydro"/>
</dbReference>
<dbReference type="InterPro" id="IPR018171">
    <property type="entry name" value="Pept_tRNA_hydro_CS"/>
</dbReference>
<dbReference type="InterPro" id="IPR036416">
    <property type="entry name" value="Pept_tRNA_hydro_sf"/>
</dbReference>
<dbReference type="NCBIfam" id="TIGR00447">
    <property type="entry name" value="pth"/>
    <property type="match status" value="1"/>
</dbReference>
<dbReference type="PANTHER" id="PTHR17224">
    <property type="entry name" value="PEPTIDYL-TRNA HYDROLASE"/>
    <property type="match status" value="1"/>
</dbReference>
<dbReference type="PANTHER" id="PTHR17224:SF1">
    <property type="entry name" value="PEPTIDYL-TRNA HYDROLASE"/>
    <property type="match status" value="1"/>
</dbReference>
<dbReference type="Pfam" id="PF01195">
    <property type="entry name" value="Pept_tRNA_hydro"/>
    <property type="match status" value="1"/>
</dbReference>
<dbReference type="SUPFAM" id="SSF53178">
    <property type="entry name" value="Peptidyl-tRNA hydrolase-like"/>
    <property type="match status" value="1"/>
</dbReference>
<dbReference type="PROSITE" id="PS01196">
    <property type="entry name" value="PEPT_TRNA_HYDROL_2"/>
    <property type="match status" value="1"/>
</dbReference>
<comment type="function">
    <text evidence="1">Hydrolyzes ribosome-free peptidyl-tRNAs (with 1 or more amino acids incorporated), which drop off the ribosome during protein synthesis, or as a result of ribosome stalling.</text>
</comment>
<comment type="function">
    <text evidence="1">Catalyzes the release of premature peptidyl moieties from peptidyl-tRNA molecules trapped in stalled 50S ribosomal subunits, and thus maintains levels of free tRNAs and 50S ribosomes.</text>
</comment>
<comment type="catalytic activity">
    <reaction evidence="1">
        <text>an N-acyl-L-alpha-aminoacyl-tRNA + H2O = an N-acyl-L-amino acid + a tRNA + H(+)</text>
        <dbReference type="Rhea" id="RHEA:54448"/>
        <dbReference type="Rhea" id="RHEA-COMP:10123"/>
        <dbReference type="Rhea" id="RHEA-COMP:13883"/>
        <dbReference type="ChEBI" id="CHEBI:15377"/>
        <dbReference type="ChEBI" id="CHEBI:15378"/>
        <dbReference type="ChEBI" id="CHEBI:59874"/>
        <dbReference type="ChEBI" id="CHEBI:78442"/>
        <dbReference type="ChEBI" id="CHEBI:138191"/>
        <dbReference type="EC" id="3.1.1.29"/>
    </reaction>
</comment>
<comment type="subunit">
    <text evidence="1">Monomer.</text>
</comment>
<comment type="subcellular location">
    <subcellularLocation>
        <location evidence="1">Cytoplasm</location>
    </subcellularLocation>
</comment>
<comment type="similarity">
    <text evidence="1">Belongs to the PTH family.</text>
</comment>
<protein>
    <recommendedName>
        <fullName evidence="1">Peptidyl-tRNA hydrolase</fullName>
        <shortName evidence="1">Pth</shortName>
        <ecNumber evidence="1">3.1.1.29</ecNumber>
    </recommendedName>
</protein>
<evidence type="ECO:0000255" key="1">
    <source>
        <dbReference type="HAMAP-Rule" id="MF_00083"/>
    </source>
</evidence>
<organism>
    <name type="scientific">Sphingopyxis alaskensis (strain DSM 13593 / LMG 18877 / RB2256)</name>
    <name type="common">Sphingomonas alaskensis</name>
    <dbReference type="NCBI Taxonomy" id="317655"/>
    <lineage>
        <taxon>Bacteria</taxon>
        <taxon>Pseudomonadati</taxon>
        <taxon>Pseudomonadota</taxon>
        <taxon>Alphaproteobacteria</taxon>
        <taxon>Sphingomonadales</taxon>
        <taxon>Sphingomonadaceae</taxon>
        <taxon>Sphingopyxis</taxon>
    </lineage>
</organism>
<reference key="1">
    <citation type="journal article" date="2009" name="Proc. Natl. Acad. Sci. U.S.A.">
        <title>The genomic basis of trophic strategy in marine bacteria.</title>
        <authorList>
            <person name="Lauro F.M."/>
            <person name="McDougald D."/>
            <person name="Thomas T."/>
            <person name="Williams T.J."/>
            <person name="Egan S."/>
            <person name="Rice S."/>
            <person name="DeMaere M.Z."/>
            <person name="Ting L."/>
            <person name="Ertan H."/>
            <person name="Johnson J."/>
            <person name="Ferriera S."/>
            <person name="Lapidus A."/>
            <person name="Anderson I."/>
            <person name="Kyrpides N."/>
            <person name="Munk A.C."/>
            <person name="Detter C."/>
            <person name="Han C.S."/>
            <person name="Brown M.V."/>
            <person name="Robb F.T."/>
            <person name="Kjelleberg S."/>
            <person name="Cavicchioli R."/>
        </authorList>
    </citation>
    <scope>NUCLEOTIDE SEQUENCE [LARGE SCALE GENOMIC DNA]</scope>
    <source>
        <strain>DSM 13593 / LMG 18877 / RB2256</strain>
    </source>
</reference>
<sequence length="189" mass="20819">MQLWVGLGNPGPKYAMHRHNVGFMAADVIAEIHDFPPPVKKFQGWLQDGRIGSTRILLLKPGTFMNESGRSVRAALDFYKLAATDVTVFYDELDLAPMKVKVKRGGGAAGHNGIRSMIQHIGDDFRRIRIGIGHPGHKDRVTGHVLGNYHKSEMEPLADLLGAIAAEAEWLAKGDDVRFQSDLALRLQG</sequence>
<feature type="chain" id="PRO_0000264111" description="Peptidyl-tRNA hydrolase">
    <location>
        <begin position="1"/>
        <end position="189"/>
    </location>
</feature>
<feature type="active site" description="Proton acceptor" evidence="1">
    <location>
        <position position="19"/>
    </location>
</feature>
<feature type="binding site" evidence="1">
    <location>
        <position position="14"/>
    </location>
    <ligand>
        <name>tRNA</name>
        <dbReference type="ChEBI" id="CHEBI:17843"/>
    </ligand>
</feature>
<feature type="binding site" evidence="1">
    <location>
        <position position="64"/>
    </location>
    <ligand>
        <name>tRNA</name>
        <dbReference type="ChEBI" id="CHEBI:17843"/>
    </ligand>
</feature>
<feature type="binding site" evidence="1">
    <location>
        <position position="66"/>
    </location>
    <ligand>
        <name>tRNA</name>
        <dbReference type="ChEBI" id="CHEBI:17843"/>
    </ligand>
</feature>
<feature type="binding site" evidence="1">
    <location>
        <position position="112"/>
    </location>
    <ligand>
        <name>tRNA</name>
        <dbReference type="ChEBI" id="CHEBI:17843"/>
    </ligand>
</feature>
<feature type="site" description="Discriminates between blocked and unblocked aminoacyl-tRNA" evidence="1">
    <location>
        <position position="9"/>
    </location>
</feature>
<feature type="site" description="Stabilizes the basic form of H active site to accept a proton" evidence="1">
    <location>
        <position position="91"/>
    </location>
</feature>